<accession>P01850</accession>
<accession>A0A0J9YYE9</accession>
<accession>A0A5B8</accession>
<accession>A6NH51</accession>
<dbReference type="EMBL" id="X00437">
    <property type="protein sequence ID" value="CAA25134.1"/>
    <property type="status" value="ALT_SEQ"/>
    <property type="molecule type" value="mRNA"/>
</dbReference>
<dbReference type="EMBL" id="M12887">
    <property type="protein sequence ID" value="AAA60661.1"/>
    <property type="molecule type" value="Genomic_DNA"/>
</dbReference>
<dbReference type="EMBL" id="L36092">
    <property type="protein sequence ID" value="AAC80213.1"/>
    <property type="molecule type" value="Genomic_DNA"/>
</dbReference>
<dbReference type="EMBL" id="AC245427">
    <property type="status" value="NOT_ANNOTATED_CDS"/>
    <property type="molecule type" value="Genomic_DNA"/>
</dbReference>
<dbReference type="EMBL" id="CH471198">
    <property type="protein sequence ID" value="EAW51914.1"/>
    <property type="molecule type" value="Genomic_DNA"/>
</dbReference>
<dbReference type="PIR" id="B25777">
    <property type="entry name" value="RWHUCY"/>
</dbReference>
<dbReference type="PDB" id="1AO7">
    <property type="method" value="X-ray"/>
    <property type="resolution" value="2.60 A"/>
    <property type="chains" value="E=1-129"/>
</dbReference>
<dbReference type="PDB" id="1FYT">
    <property type="method" value="X-ray"/>
    <property type="resolution" value="2.60 A"/>
    <property type="chains" value="E=1-133"/>
</dbReference>
<dbReference type="PDB" id="1J8H">
    <property type="method" value="X-ray"/>
    <property type="resolution" value="2.40 A"/>
    <property type="chains" value="E=1-133"/>
</dbReference>
<dbReference type="PDB" id="1KGC">
    <property type="method" value="X-ray"/>
    <property type="resolution" value="1.50 A"/>
    <property type="chains" value="E=1-129"/>
</dbReference>
<dbReference type="PDB" id="1KTK">
    <property type="method" value="X-ray"/>
    <property type="resolution" value="3.00 A"/>
    <property type="chains" value="E/F=4-129"/>
</dbReference>
<dbReference type="PDB" id="1MI5">
    <property type="method" value="X-ray"/>
    <property type="resolution" value="2.50 A"/>
    <property type="chains" value="E=1-129"/>
</dbReference>
<dbReference type="PDB" id="1OGA">
    <property type="method" value="X-ray"/>
    <property type="resolution" value="1.40 A"/>
    <property type="chains" value="E=1-129"/>
</dbReference>
<dbReference type="PDB" id="1YMM">
    <property type="method" value="X-ray"/>
    <property type="resolution" value="3.50 A"/>
    <property type="chains" value="E=1-130"/>
</dbReference>
<dbReference type="PDB" id="1ZGL">
    <property type="method" value="X-ray"/>
    <property type="resolution" value="2.80 A"/>
    <property type="chains" value="P/R/T/V=1-130"/>
</dbReference>
<dbReference type="PDB" id="2AK4">
    <property type="method" value="X-ray"/>
    <property type="resolution" value="2.50 A"/>
    <property type="chains" value="E/J/P/U=1-129"/>
</dbReference>
<dbReference type="PDB" id="2AXH">
    <property type="method" value="X-ray"/>
    <property type="resolution" value="2.70 A"/>
    <property type="chains" value="A/B=1-129"/>
</dbReference>
<dbReference type="PDB" id="2BNQ">
    <property type="method" value="X-ray"/>
    <property type="resolution" value="1.70 A"/>
    <property type="chains" value="E=1-129"/>
</dbReference>
<dbReference type="PDB" id="2BNR">
    <property type="method" value="X-ray"/>
    <property type="resolution" value="1.90 A"/>
    <property type="chains" value="E=1-129"/>
</dbReference>
<dbReference type="PDB" id="2BNU">
    <property type="method" value="X-ray"/>
    <property type="resolution" value="1.40 A"/>
    <property type="chains" value="B=1-129"/>
</dbReference>
<dbReference type="PDB" id="2CDE">
    <property type="method" value="X-ray"/>
    <property type="resolution" value="3.50 A"/>
    <property type="chains" value="B/D/F=1-129"/>
</dbReference>
<dbReference type="PDB" id="2CDF">
    <property type="method" value="X-ray"/>
    <property type="resolution" value="2.25 A"/>
    <property type="chains" value="B=1-129"/>
</dbReference>
<dbReference type="PDB" id="2CDG">
    <property type="method" value="X-ray"/>
    <property type="resolution" value="2.60 A"/>
    <property type="chains" value="B=1-129"/>
</dbReference>
<dbReference type="PDB" id="2ESV">
    <property type="method" value="X-ray"/>
    <property type="resolution" value="2.60 A"/>
    <property type="chains" value="E=1-129"/>
</dbReference>
<dbReference type="PDB" id="2F53">
    <property type="method" value="X-ray"/>
    <property type="resolution" value="2.10 A"/>
    <property type="chains" value="E=1-129"/>
</dbReference>
<dbReference type="PDB" id="2F54">
    <property type="method" value="X-ray"/>
    <property type="resolution" value="2.70 A"/>
    <property type="chains" value="E/L=5-129"/>
</dbReference>
<dbReference type="PDB" id="2GJ6">
    <property type="method" value="X-ray"/>
    <property type="resolution" value="2.56 A"/>
    <property type="chains" value="E=1-129"/>
</dbReference>
<dbReference type="PDB" id="2IAL">
    <property type="method" value="X-ray"/>
    <property type="resolution" value="1.92 A"/>
    <property type="chains" value="B/D=1-129"/>
</dbReference>
<dbReference type="PDB" id="2IAM">
    <property type="method" value="X-ray"/>
    <property type="resolution" value="2.80 A"/>
    <property type="chains" value="D=1-129"/>
</dbReference>
<dbReference type="PDB" id="2IAN">
    <property type="method" value="X-ray"/>
    <property type="resolution" value="2.80 A"/>
    <property type="chains" value="E/J/O/T=1-129"/>
</dbReference>
<dbReference type="PDB" id="2NTS">
    <property type="method" value="X-ray"/>
    <property type="resolution" value="2.40 A"/>
    <property type="chains" value="P=5-127"/>
</dbReference>
<dbReference type="PDB" id="2NW2">
    <property type="method" value="X-ray"/>
    <property type="resolution" value="1.40 A"/>
    <property type="chains" value="B=1-129"/>
</dbReference>
<dbReference type="PDB" id="2NX5">
    <property type="method" value="X-ray"/>
    <property type="resolution" value="2.70 A"/>
    <property type="chains" value="E/J/P/U=1-129"/>
</dbReference>
<dbReference type="PDB" id="2P5E">
    <property type="method" value="X-ray"/>
    <property type="resolution" value="1.89 A"/>
    <property type="chains" value="E=1-129"/>
</dbReference>
<dbReference type="PDB" id="2P5W">
    <property type="method" value="X-ray"/>
    <property type="resolution" value="2.20 A"/>
    <property type="chains" value="E=1-129"/>
</dbReference>
<dbReference type="PDB" id="2PO6">
    <property type="method" value="X-ray"/>
    <property type="resolution" value="3.20 A"/>
    <property type="chains" value="D/H=1-129"/>
</dbReference>
<dbReference type="PDB" id="2PYE">
    <property type="method" value="X-ray"/>
    <property type="resolution" value="2.30 A"/>
    <property type="chains" value="E=1-129"/>
</dbReference>
<dbReference type="PDB" id="2PYF">
    <property type="method" value="X-ray"/>
    <property type="resolution" value="2.20 A"/>
    <property type="chains" value="B=1-129"/>
</dbReference>
<dbReference type="PDB" id="2VLJ">
    <property type="method" value="X-ray"/>
    <property type="resolution" value="2.40 A"/>
    <property type="chains" value="E=1-129"/>
</dbReference>
<dbReference type="PDB" id="2VLK">
    <property type="method" value="X-ray"/>
    <property type="resolution" value="2.50 A"/>
    <property type="chains" value="E=1-129"/>
</dbReference>
<dbReference type="PDB" id="2VLM">
    <property type="method" value="X-ray"/>
    <property type="resolution" value="1.98 A"/>
    <property type="chains" value="E=1-129"/>
</dbReference>
<dbReference type="PDB" id="2VLR">
    <property type="method" value="X-ray"/>
    <property type="resolution" value="2.30 A"/>
    <property type="chains" value="E/J=1-129"/>
</dbReference>
<dbReference type="PDB" id="2XN9">
    <property type="method" value="X-ray"/>
    <property type="resolution" value="2.30 A"/>
    <property type="chains" value="B=1-129"/>
</dbReference>
<dbReference type="PDB" id="2XNA">
    <property type="method" value="X-ray"/>
    <property type="resolution" value="2.10 A"/>
    <property type="chains" value="B=1-129"/>
</dbReference>
<dbReference type="PDB" id="3ARB">
    <property type="method" value="X-ray"/>
    <property type="resolution" value="2.70 A"/>
    <property type="chains" value="D=1-129"/>
</dbReference>
<dbReference type="PDB" id="3ARD">
    <property type="method" value="X-ray"/>
    <property type="resolution" value="3.01 A"/>
    <property type="chains" value="D=1-129"/>
</dbReference>
<dbReference type="PDB" id="3ARE">
    <property type="method" value="X-ray"/>
    <property type="resolution" value="2.80 A"/>
    <property type="chains" value="D=1-129"/>
</dbReference>
<dbReference type="PDB" id="3ARF">
    <property type="method" value="X-ray"/>
    <property type="resolution" value="2.90 A"/>
    <property type="chains" value="D=1-129"/>
</dbReference>
<dbReference type="PDB" id="3ARG">
    <property type="method" value="X-ray"/>
    <property type="resolution" value="3.00 A"/>
    <property type="chains" value="D=1-129"/>
</dbReference>
<dbReference type="PDB" id="3D39">
    <property type="method" value="X-ray"/>
    <property type="resolution" value="2.81 A"/>
    <property type="chains" value="E=1-129"/>
</dbReference>
<dbReference type="PDB" id="3D3V">
    <property type="method" value="X-ray"/>
    <property type="resolution" value="2.80 A"/>
    <property type="chains" value="E=1-129"/>
</dbReference>
<dbReference type="PDB" id="3DX9">
    <property type="method" value="X-ray"/>
    <property type="resolution" value="2.75 A"/>
    <property type="chains" value="B/D=1-129"/>
</dbReference>
<dbReference type="PDB" id="3DXA">
    <property type="method" value="X-ray"/>
    <property type="resolution" value="3.50 A"/>
    <property type="chains" value="E/J/O=1-129"/>
</dbReference>
<dbReference type="PDB" id="3FFC">
    <property type="method" value="X-ray"/>
    <property type="resolution" value="2.80 A"/>
    <property type="chains" value="E/J=1-129"/>
</dbReference>
<dbReference type="PDB" id="3HE6">
    <property type="method" value="X-ray"/>
    <property type="resolution" value="2.90 A"/>
    <property type="chains" value="D=1-129"/>
</dbReference>
<dbReference type="PDB" id="3HG1">
    <property type="method" value="X-ray"/>
    <property type="resolution" value="3.00 A"/>
    <property type="chains" value="E=1-129"/>
</dbReference>
<dbReference type="PDB" id="3KPR">
    <property type="method" value="X-ray"/>
    <property type="resolution" value="2.60 A"/>
    <property type="chains" value="E/J=1-129"/>
</dbReference>
<dbReference type="PDB" id="3KPS">
    <property type="method" value="X-ray"/>
    <property type="resolution" value="2.70 A"/>
    <property type="chains" value="E=1-129"/>
</dbReference>
<dbReference type="PDB" id="3O4L">
    <property type="method" value="X-ray"/>
    <property type="resolution" value="2.54 A"/>
    <property type="chains" value="E=1-129"/>
</dbReference>
<dbReference type="PDB" id="3TN0">
    <property type="method" value="X-ray"/>
    <property type="resolution" value="3.20 A"/>
    <property type="chains" value="D=1-129"/>
</dbReference>
<dbReference type="PDB" id="4G8E">
    <property type="method" value="X-ray"/>
    <property type="resolution" value="2.20 A"/>
    <property type="chains" value="B=1-129"/>
</dbReference>
<dbReference type="PDB" id="4G8F">
    <property type="method" value="X-ray"/>
    <property type="resolution" value="2.10 A"/>
    <property type="chains" value="B=1-129"/>
</dbReference>
<dbReference type="PDB" id="4GG6">
    <property type="method" value="X-ray"/>
    <property type="resolution" value="3.20 A"/>
    <property type="chains" value="F/H=1-129"/>
</dbReference>
<dbReference type="PDB" id="4GG8">
    <property type="method" value="X-ray"/>
    <property type="resolution" value="3.20 A"/>
    <property type="chains" value="B/F=1-129"/>
</dbReference>
<dbReference type="PDB" id="4IIQ">
    <property type="method" value="X-ray"/>
    <property type="resolution" value="2.86 A"/>
    <property type="chains" value="B=1-129"/>
</dbReference>
<dbReference type="PDB" id="4JFD">
    <property type="method" value="X-ray"/>
    <property type="resolution" value="2.46 A"/>
    <property type="chains" value="E=1-129"/>
</dbReference>
<dbReference type="PDB" id="4JFE">
    <property type="method" value="X-ray"/>
    <property type="resolution" value="2.70 A"/>
    <property type="chains" value="E=1-129"/>
</dbReference>
<dbReference type="PDB" id="4JFF">
    <property type="method" value="X-ray"/>
    <property type="resolution" value="2.43 A"/>
    <property type="chains" value="E=1-129"/>
</dbReference>
<dbReference type="PDB" id="4JFH">
    <property type="method" value="X-ray"/>
    <property type="resolution" value="2.40 A"/>
    <property type="chains" value="E=1-129"/>
</dbReference>
<dbReference type="PDB" id="4JRX">
    <property type="method" value="X-ray"/>
    <property type="resolution" value="2.30 A"/>
    <property type="chains" value="E=1-129"/>
</dbReference>
<dbReference type="PDB" id="4JRY">
    <property type="method" value="X-ray"/>
    <property type="resolution" value="2.80 A"/>
    <property type="chains" value="E=1-129"/>
</dbReference>
<dbReference type="PDB" id="4L4T">
    <property type="method" value="X-ray"/>
    <property type="resolution" value="2.00 A"/>
    <property type="chains" value="E/H=1-129"/>
</dbReference>
<dbReference type="PDB" id="4L4V">
    <property type="method" value="X-ray"/>
    <property type="resolution" value="1.90 A"/>
    <property type="chains" value="E/H=1-129"/>
</dbReference>
<dbReference type="PDB" id="4L9L">
    <property type="method" value="X-ray"/>
    <property type="resolution" value="3.40 A"/>
    <property type="chains" value="B=1-129"/>
</dbReference>
<dbReference type="PDB" id="4LCC">
    <property type="method" value="X-ray"/>
    <property type="resolution" value="3.26 A"/>
    <property type="chains" value="B=1-129"/>
</dbReference>
<dbReference type="PDB" id="4LCW">
    <property type="method" value="X-ray"/>
    <property type="resolution" value="2.40 A"/>
    <property type="chains" value="E/H=1-129"/>
</dbReference>
<dbReference type="PDB" id="4MJI">
    <property type="method" value="X-ray"/>
    <property type="resolution" value="2.99 A"/>
    <property type="chains" value="E/J=1-129"/>
</dbReference>
<dbReference type="PDB" id="4MNQ">
    <property type="method" value="X-ray"/>
    <property type="resolution" value="2.74 A"/>
    <property type="chains" value="E=1-129"/>
</dbReference>
<dbReference type="PDB" id="4NQC">
    <property type="method" value="X-ray"/>
    <property type="resolution" value="2.50 A"/>
    <property type="chains" value="E/H=1-129"/>
</dbReference>
<dbReference type="PDB" id="4NQD">
    <property type="method" value="X-ray"/>
    <property type="resolution" value="2.20 A"/>
    <property type="chains" value="E/H=1-129"/>
</dbReference>
<dbReference type="PDB" id="4NQE">
    <property type="method" value="X-ray"/>
    <property type="resolution" value="2.10 A"/>
    <property type="chains" value="E/H=1-129"/>
</dbReference>
<dbReference type="PDB" id="4OZF">
    <property type="method" value="X-ray"/>
    <property type="resolution" value="2.70 A"/>
    <property type="chains" value="H=1-129"/>
</dbReference>
<dbReference type="PDB" id="4OZG">
    <property type="method" value="X-ray"/>
    <property type="resolution" value="3.00 A"/>
    <property type="chains" value="F/H=1-129"/>
</dbReference>
<dbReference type="PDB" id="4OZH">
    <property type="method" value="X-ray"/>
    <property type="resolution" value="2.80 A"/>
    <property type="chains" value="F/H=1-129"/>
</dbReference>
<dbReference type="PDB" id="4OZI">
    <property type="method" value="X-ray"/>
    <property type="resolution" value="3.20 A"/>
    <property type="chains" value="F/H=1-129"/>
</dbReference>
<dbReference type="PDB" id="4P46">
    <property type="method" value="X-ray"/>
    <property type="resolution" value="2.85 A"/>
    <property type="chains" value="B=1-127"/>
</dbReference>
<dbReference type="PDB" id="4PRH">
    <property type="method" value="X-ray"/>
    <property type="resolution" value="2.50 A"/>
    <property type="chains" value="E=1-129"/>
</dbReference>
<dbReference type="PDB" id="4PRI">
    <property type="method" value="X-ray"/>
    <property type="resolution" value="2.40 A"/>
    <property type="chains" value="E=1-129"/>
</dbReference>
<dbReference type="PDB" id="4PRP">
    <property type="method" value="X-ray"/>
    <property type="resolution" value="2.50 A"/>
    <property type="chains" value="E=1-129"/>
</dbReference>
<dbReference type="PDB" id="4X6B">
    <property type="method" value="X-ray"/>
    <property type="resolution" value="2.10 A"/>
    <property type="chains" value="B/D=1-129"/>
</dbReference>
<dbReference type="PDB" id="4X6C">
    <property type="method" value="X-ray"/>
    <property type="resolution" value="2.80 A"/>
    <property type="chains" value="F/H=1-129"/>
</dbReference>
<dbReference type="PDB" id="4X6D">
    <property type="method" value="X-ray"/>
    <property type="resolution" value="2.98 A"/>
    <property type="chains" value="F/H=1-129"/>
</dbReference>
<dbReference type="PDB" id="4ZDH">
    <property type="method" value="X-ray"/>
    <property type="resolution" value="2.10 A"/>
    <property type="chains" value="B=1-129"/>
</dbReference>
<dbReference type="PDB" id="7RYL">
    <property type="method" value="X-ray"/>
    <property type="resolution" value="2.00 A"/>
    <property type="chains" value="C=1-129"/>
</dbReference>
<dbReference type="PDB" id="7RYM">
    <property type="method" value="X-ray"/>
    <property type="resolution" value="3.20 A"/>
    <property type="chains" value="C=1-129"/>
</dbReference>
<dbReference type="PDB" id="7RYN">
    <property type="method" value="X-ray"/>
    <property type="resolution" value="2.70 A"/>
    <property type="chains" value="C=1-129"/>
</dbReference>
<dbReference type="PDB" id="7RYO">
    <property type="method" value="X-ray"/>
    <property type="resolution" value="3.00 A"/>
    <property type="chains" value="C=1-129"/>
</dbReference>
<dbReference type="PDB" id="7T2B">
    <property type="method" value="X-ray"/>
    <property type="resolution" value="2.80 A"/>
    <property type="chains" value="E/J/O/T=1-129"/>
</dbReference>
<dbReference type="PDB" id="7T2C">
    <property type="method" value="X-ray"/>
    <property type="resolution" value="3.10 A"/>
    <property type="chains" value="E=1-129"/>
</dbReference>
<dbReference type="PDB" id="7T2D">
    <property type="method" value="X-ray"/>
    <property type="resolution" value="3.40 A"/>
    <property type="chains" value="E/J/O/T=1-129"/>
</dbReference>
<dbReference type="PDB" id="8RRO">
    <property type="method" value="X-ray"/>
    <property type="resolution" value="3.50 A"/>
    <property type="chains" value="B/G/L/Q/V/a/f/k=1-129"/>
</dbReference>
<dbReference type="PDB" id="9BBC">
    <property type="method" value="EM"/>
    <property type="resolution" value="3.30 A"/>
    <property type="chains" value="B=1-172"/>
</dbReference>
<dbReference type="PDBsum" id="1AO7"/>
<dbReference type="PDBsum" id="1FYT"/>
<dbReference type="PDBsum" id="1J8H"/>
<dbReference type="PDBsum" id="1KGC"/>
<dbReference type="PDBsum" id="1KTK"/>
<dbReference type="PDBsum" id="1MI5"/>
<dbReference type="PDBsum" id="1OGA"/>
<dbReference type="PDBsum" id="1YMM"/>
<dbReference type="PDBsum" id="1ZGL"/>
<dbReference type="PDBsum" id="2AK4"/>
<dbReference type="PDBsum" id="2AXH"/>
<dbReference type="PDBsum" id="2BNQ"/>
<dbReference type="PDBsum" id="2BNR"/>
<dbReference type="PDBsum" id="2BNU"/>
<dbReference type="PDBsum" id="2CDE"/>
<dbReference type="PDBsum" id="2CDF"/>
<dbReference type="PDBsum" id="2CDG"/>
<dbReference type="PDBsum" id="2ESV"/>
<dbReference type="PDBsum" id="2F53"/>
<dbReference type="PDBsum" id="2F54"/>
<dbReference type="PDBsum" id="2GJ6"/>
<dbReference type="PDBsum" id="2IAL"/>
<dbReference type="PDBsum" id="2IAM"/>
<dbReference type="PDBsum" id="2IAN"/>
<dbReference type="PDBsum" id="2NTS"/>
<dbReference type="PDBsum" id="2NW2"/>
<dbReference type="PDBsum" id="2NX5"/>
<dbReference type="PDBsum" id="2P5E"/>
<dbReference type="PDBsum" id="2P5W"/>
<dbReference type="PDBsum" id="2PO6"/>
<dbReference type="PDBsum" id="2PYE"/>
<dbReference type="PDBsum" id="2PYF"/>
<dbReference type="PDBsum" id="2VLJ"/>
<dbReference type="PDBsum" id="2VLK"/>
<dbReference type="PDBsum" id="2VLM"/>
<dbReference type="PDBsum" id="2VLR"/>
<dbReference type="PDBsum" id="2XN9"/>
<dbReference type="PDBsum" id="2XNA"/>
<dbReference type="PDBsum" id="3ARB"/>
<dbReference type="PDBsum" id="3ARD"/>
<dbReference type="PDBsum" id="3ARE"/>
<dbReference type="PDBsum" id="3ARF"/>
<dbReference type="PDBsum" id="3ARG"/>
<dbReference type="PDBsum" id="3D39"/>
<dbReference type="PDBsum" id="3D3V"/>
<dbReference type="PDBsum" id="3DX9"/>
<dbReference type="PDBsum" id="3DXA"/>
<dbReference type="PDBsum" id="3FFC"/>
<dbReference type="PDBsum" id="3HE6"/>
<dbReference type="PDBsum" id="3HG1"/>
<dbReference type="PDBsum" id="3KPR"/>
<dbReference type="PDBsum" id="3KPS"/>
<dbReference type="PDBsum" id="3O4L"/>
<dbReference type="PDBsum" id="3TN0"/>
<dbReference type="PDBsum" id="4G8E"/>
<dbReference type="PDBsum" id="4G8F"/>
<dbReference type="PDBsum" id="4GG6"/>
<dbReference type="PDBsum" id="4GG8"/>
<dbReference type="PDBsum" id="4IIQ"/>
<dbReference type="PDBsum" id="4JFD"/>
<dbReference type="PDBsum" id="4JFE"/>
<dbReference type="PDBsum" id="4JFF"/>
<dbReference type="PDBsum" id="4JFH"/>
<dbReference type="PDBsum" id="4JRX"/>
<dbReference type="PDBsum" id="4JRY"/>
<dbReference type="PDBsum" id="4L4T"/>
<dbReference type="PDBsum" id="4L4V"/>
<dbReference type="PDBsum" id="4L9L"/>
<dbReference type="PDBsum" id="4LCC"/>
<dbReference type="PDBsum" id="4LCW"/>
<dbReference type="PDBsum" id="4MJI"/>
<dbReference type="PDBsum" id="4MNQ"/>
<dbReference type="PDBsum" id="4NQC"/>
<dbReference type="PDBsum" id="4NQD"/>
<dbReference type="PDBsum" id="4NQE"/>
<dbReference type="PDBsum" id="4OZF"/>
<dbReference type="PDBsum" id="4OZG"/>
<dbReference type="PDBsum" id="4OZH"/>
<dbReference type="PDBsum" id="4OZI"/>
<dbReference type="PDBsum" id="4P46"/>
<dbReference type="PDBsum" id="4PRH"/>
<dbReference type="PDBsum" id="4PRI"/>
<dbReference type="PDBsum" id="4PRP"/>
<dbReference type="PDBsum" id="4X6B"/>
<dbReference type="PDBsum" id="4X6C"/>
<dbReference type="PDBsum" id="4X6D"/>
<dbReference type="PDBsum" id="4ZDH"/>
<dbReference type="PDBsum" id="7RYL"/>
<dbReference type="PDBsum" id="7RYM"/>
<dbReference type="PDBsum" id="7RYN"/>
<dbReference type="PDBsum" id="7RYO"/>
<dbReference type="PDBsum" id="7T2B"/>
<dbReference type="PDBsum" id="7T2C"/>
<dbReference type="PDBsum" id="7T2D"/>
<dbReference type="PDBsum" id="8RRO"/>
<dbReference type="PDBsum" id="9BBC"/>
<dbReference type="SMR" id="P01850"/>
<dbReference type="ComplexPortal" id="CPX-6581">
    <property type="entry name" value="Alpha-beta T cell receptor complex, TRBC1 variant"/>
</dbReference>
<dbReference type="FunCoup" id="P01850">
    <property type="interactions" value="120"/>
</dbReference>
<dbReference type="IntAct" id="P01850">
    <property type="interactions" value="3"/>
</dbReference>
<dbReference type="DrugBank" id="DB02740">
    <property type="generic name" value="3-Indolebutyric Acid"/>
</dbReference>
<dbReference type="IMGT_GENE-DB" id="TRBC1"/>
<dbReference type="GlyCosmos" id="P01850">
    <property type="glycosylation" value="1 site, No reported glycans"/>
</dbReference>
<dbReference type="GlyGen" id="P01850">
    <property type="glycosylation" value="1 site"/>
</dbReference>
<dbReference type="iPTMnet" id="P01850"/>
<dbReference type="PhosphoSitePlus" id="P01850"/>
<dbReference type="BioMuta" id="ENSG00000211751"/>
<dbReference type="BioMuta" id="HGNC:12156"/>
<dbReference type="DMDM" id="294862488"/>
<dbReference type="MassIVE" id="P01850"/>
<dbReference type="ProteomicsDB" id="51492"/>
<dbReference type="ABCD" id="P01850">
    <property type="antibodies" value="10 sequenced antibodies"/>
</dbReference>
<dbReference type="AGR" id="HGNC:12156"/>
<dbReference type="GeneCards" id="TRBC1"/>
<dbReference type="HGNC" id="HGNC:12156">
    <property type="gene designation" value="TRBC1"/>
</dbReference>
<dbReference type="HPA" id="ENSG00000211751">
    <property type="expression patterns" value="Tissue enriched (lymphoid)"/>
</dbReference>
<dbReference type="MalaCards" id="TRBC1"/>
<dbReference type="MIM" id="186930">
    <property type="type" value="gene"/>
</dbReference>
<dbReference type="neXtProt" id="NX_P01850"/>
<dbReference type="InParanoid" id="P01850"/>
<dbReference type="OMA" id="VLMAMIK"/>
<dbReference type="OrthoDB" id="9049585at2759"/>
<dbReference type="PAN-GO" id="P01850">
    <property type="GO annotations" value="11 GO annotations based on evolutionary models"/>
</dbReference>
<dbReference type="PhylomeDB" id="P01850"/>
<dbReference type="PathwayCommons" id="P01850"/>
<dbReference type="Reactome" id="R-HSA-198933">
    <property type="pathway name" value="Immunoregulatory interactions between a Lymphoid and a non-Lymphoid cell"/>
</dbReference>
<dbReference type="Reactome" id="R-HSA-202424">
    <property type="pathway name" value="Downstream TCR signaling"/>
</dbReference>
<dbReference type="Reactome" id="R-HSA-202427">
    <property type="pathway name" value="Phosphorylation of CD3 and TCR zeta chains"/>
</dbReference>
<dbReference type="Reactome" id="R-HSA-202430">
    <property type="pathway name" value="Translocation of ZAP-70 to Immunological synapse"/>
</dbReference>
<dbReference type="Reactome" id="R-HSA-202433">
    <property type="pathway name" value="Generation of second messenger molecules"/>
</dbReference>
<dbReference type="Reactome" id="R-HSA-389948">
    <property type="pathway name" value="Co-inhibition by PD-1"/>
</dbReference>
<dbReference type="SignaLink" id="P01850"/>
<dbReference type="SIGNOR" id="P01850"/>
<dbReference type="ChiTaRS" id="TRBC1">
    <property type="organism name" value="human"/>
</dbReference>
<dbReference type="EvolutionaryTrace" id="P01850"/>
<dbReference type="Pharos" id="P01850">
    <property type="development level" value="Tdark"/>
</dbReference>
<dbReference type="PRO" id="PR:P01850"/>
<dbReference type="Proteomes" id="UP000005640">
    <property type="component" value="Unplaced"/>
</dbReference>
<dbReference type="RNAct" id="P01850">
    <property type="molecule type" value="protein"/>
</dbReference>
<dbReference type="GO" id="GO:0042105">
    <property type="term" value="C:alpha-beta T cell receptor complex"/>
    <property type="evidence" value="ECO:0000250"/>
    <property type="project" value="ComplexPortal"/>
</dbReference>
<dbReference type="GO" id="GO:0016020">
    <property type="term" value="C:membrane"/>
    <property type="evidence" value="ECO:0000303"/>
    <property type="project" value="UniProtKB"/>
</dbReference>
<dbReference type="GO" id="GO:0005886">
    <property type="term" value="C:plasma membrane"/>
    <property type="evidence" value="ECO:0000250"/>
    <property type="project" value="ComplexPortal"/>
</dbReference>
<dbReference type="GO" id="GO:0002250">
    <property type="term" value="P:adaptive immune response"/>
    <property type="evidence" value="ECO:0000303"/>
    <property type="project" value="ComplexPortal"/>
</dbReference>
<dbReference type="GO" id="GO:0046631">
    <property type="term" value="P:alpha-beta T cell activation"/>
    <property type="evidence" value="ECO:0000303"/>
    <property type="project" value="ComplexPortal"/>
</dbReference>
<dbReference type="GO" id="GO:0006955">
    <property type="term" value="P:immune response"/>
    <property type="evidence" value="ECO:0000303"/>
    <property type="project" value="UniProtKB"/>
</dbReference>
<dbReference type="GO" id="GO:0050852">
    <property type="term" value="P:T cell receptor signaling pathway"/>
    <property type="evidence" value="ECO:0000303"/>
    <property type="project" value="ComplexPortal"/>
</dbReference>
<dbReference type="CDD" id="cd05769">
    <property type="entry name" value="IgC1_TCR_beta"/>
    <property type="match status" value="1"/>
</dbReference>
<dbReference type="FunFam" id="2.60.40.10:FF:001090">
    <property type="entry name" value="T cell receptor beta constant 1"/>
    <property type="match status" value="1"/>
</dbReference>
<dbReference type="Gene3D" id="2.60.40.10">
    <property type="entry name" value="Immunoglobulins"/>
    <property type="match status" value="1"/>
</dbReference>
<dbReference type="InterPro" id="IPR007110">
    <property type="entry name" value="Ig-like_dom"/>
</dbReference>
<dbReference type="InterPro" id="IPR036179">
    <property type="entry name" value="Ig-like_dom_sf"/>
</dbReference>
<dbReference type="InterPro" id="IPR013783">
    <property type="entry name" value="Ig-like_fold"/>
</dbReference>
<dbReference type="InterPro" id="IPR003597">
    <property type="entry name" value="Ig_C1-set"/>
</dbReference>
<dbReference type="InterPro" id="IPR050380">
    <property type="entry name" value="Immune_Resp_Modulators"/>
</dbReference>
<dbReference type="PANTHER" id="PTHR23411">
    <property type="entry name" value="TAPASIN"/>
    <property type="match status" value="1"/>
</dbReference>
<dbReference type="Pfam" id="PF07654">
    <property type="entry name" value="C1-set"/>
    <property type="match status" value="1"/>
</dbReference>
<dbReference type="SMART" id="SM00407">
    <property type="entry name" value="IGc1"/>
    <property type="match status" value="1"/>
</dbReference>
<dbReference type="SUPFAM" id="SSF48726">
    <property type="entry name" value="Immunoglobulin"/>
    <property type="match status" value="1"/>
</dbReference>
<dbReference type="PROSITE" id="PS50835">
    <property type="entry name" value="IG_LIKE"/>
    <property type="match status" value="1"/>
</dbReference>
<gene>
    <name evidence="12" type="primary">TRBC1</name>
</gene>
<protein>
    <recommendedName>
        <fullName evidence="12">T cell receptor beta constant 1</fullName>
    </recommendedName>
</protein>
<reference key="1">
    <citation type="journal article" date="1984" name="Nature">
        <title>A human T cell-specific cDNA clone encodes a protein having extensive homology to immunoglobulin chains.</title>
        <authorList>
            <person name="Yanagi Y."/>
            <person name="Yoshikai Y."/>
            <person name="Leggett K."/>
            <person name="Clark S.P."/>
            <person name="Aleksander I."/>
            <person name="Mak T.W."/>
        </authorList>
    </citation>
    <scope>NUCLEOTIDE SEQUENCE [MRNA] (IMGT ALLELE TRBC1*01)</scope>
</reference>
<reference key="2">
    <citation type="journal article" date="1985" name="Proc. Natl. Acad. Sci. U.S.A.">
        <title>Sequence and evolution of the human T-cell antigen receptor beta-chain genes.</title>
        <authorList>
            <person name="Tunnacliffe A."/>
            <person name="Kefford R."/>
            <person name="Milstein C."/>
            <person name="Forster A."/>
            <person name="Rabbitts T.H."/>
        </authorList>
    </citation>
    <scope>NUCLEOTIDE SEQUENCE [GENOMIC DNA] (IMGT ALLELE TRBC1*01)</scope>
</reference>
<reference key="3">
    <citation type="journal article" date="1996" name="Science">
        <title>The complete 685-kilobase DNA sequence of the human beta T cell receptor locus.</title>
        <authorList>
            <person name="Rowen L."/>
            <person name="Koop B.F."/>
            <person name="Hood L."/>
        </authorList>
    </citation>
    <scope>NUCLEOTIDE SEQUENCE [GENOMIC DNA] (IMGT ALLELE TRBC1*01)</scope>
</reference>
<reference key="4">
    <citation type="journal article" date="2003" name="Nature">
        <title>The DNA sequence of human chromosome 7.</title>
        <authorList>
            <person name="Hillier L.W."/>
            <person name="Fulton R.S."/>
            <person name="Fulton L.A."/>
            <person name="Graves T.A."/>
            <person name="Pepin K.H."/>
            <person name="Wagner-McPherson C."/>
            <person name="Layman D."/>
            <person name="Maas J."/>
            <person name="Jaeger S."/>
            <person name="Walker R."/>
            <person name="Wylie K."/>
            <person name="Sekhon M."/>
            <person name="Becker M.C."/>
            <person name="O'Laughlin M.D."/>
            <person name="Schaller M.E."/>
            <person name="Fewell G.A."/>
            <person name="Delehaunty K.D."/>
            <person name="Miner T.L."/>
            <person name="Nash W.E."/>
            <person name="Cordes M."/>
            <person name="Du H."/>
            <person name="Sun H."/>
            <person name="Edwards J."/>
            <person name="Bradshaw-Cordum H."/>
            <person name="Ali J."/>
            <person name="Andrews S."/>
            <person name="Isak A."/>
            <person name="Vanbrunt A."/>
            <person name="Nguyen C."/>
            <person name="Du F."/>
            <person name="Lamar B."/>
            <person name="Courtney L."/>
            <person name="Kalicki J."/>
            <person name="Ozersky P."/>
            <person name="Bielicki L."/>
            <person name="Scott K."/>
            <person name="Holmes A."/>
            <person name="Harkins R."/>
            <person name="Harris A."/>
            <person name="Strong C.M."/>
            <person name="Hou S."/>
            <person name="Tomlinson C."/>
            <person name="Dauphin-Kohlberg S."/>
            <person name="Kozlowicz-Reilly A."/>
            <person name="Leonard S."/>
            <person name="Rohlfing T."/>
            <person name="Rock S.M."/>
            <person name="Tin-Wollam A.-M."/>
            <person name="Abbott A."/>
            <person name="Minx P."/>
            <person name="Maupin R."/>
            <person name="Strowmatt C."/>
            <person name="Latreille P."/>
            <person name="Miller N."/>
            <person name="Johnson D."/>
            <person name="Murray J."/>
            <person name="Woessner J.P."/>
            <person name="Wendl M.C."/>
            <person name="Yang S.-P."/>
            <person name="Schultz B.R."/>
            <person name="Wallis J.W."/>
            <person name="Spieth J."/>
            <person name="Bieri T.A."/>
            <person name="Nelson J.O."/>
            <person name="Berkowicz N."/>
            <person name="Wohldmann P.E."/>
            <person name="Cook L.L."/>
            <person name="Hickenbotham M.T."/>
            <person name="Eldred J."/>
            <person name="Williams D."/>
            <person name="Bedell J.A."/>
            <person name="Mardis E.R."/>
            <person name="Clifton S.W."/>
            <person name="Chissoe S.L."/>
            <person name="Marra M.A."/>
            <person name="Raymond C."/>
            <person name="Haugen E."/>
            <person name="Gillett W."/>
            <person name="Zhou Y."/>
            <person name="James R."/>
            <person name="Phelps K."/>
            <person name="Iadanoto S."/>
            <person name="Bubb K."/>
            <person name="Simms E."/>
            <person name="Levy R."/>
            <person name="Clendenning J."/>
            <person name="Kaul R."/>
            <person name="Kent W.J."/>
            <person name="Furey T.S."/>
            <person name="Baertsch R.A."/>
            <person name="Brent M.R."/>
            <person name="Keibler E."/>
            <person name="Flicek P."/>
            <person name="Bork P."/>
            <person name="Suyama M."/>
            <person name="Bailey J.A."/>
            <person name="Portnoy M.E."/>
            <person name="Torrents D."/>
            <person name="Chinwalla A.T."/>
            <person name="Gish W.R."/>
            <person name="Eddy S.R."/>
            <person name="McPherson J.D."/>
            <person name="Olson M.V."/>
            <person name="Eichler E.E."/>
            <person name="Green E.D."/>
            <person name="Waterston R.H."/>
            <person name="Wilson R.K."/>
        </authorList>
    </citation>
    <scope>NUCLEOTIDE SEQUENCE [LARGE SCALE GENOMIC DNA] (IMGT ALLELE TRBC1*01)</scope>
</reference>
<reference key="5">
    <citation type="submission" date="2005-09" db="EMBL/GenBank/DDBJ databases">
        <authorList>
            <person name="Mural R.J."/>
            <person name="Istrail S."/>
            <person name="Sutton G.G."/>
            <person name="Florea L."/>
            <person name="Halpern A.L."/>
            <person name="Mobarry C.M."/>
            <person name="Lippert R."/>
            <person name="Walenz B."/>
            <person name="Shatkay H."/>
            <person name="Dew I."/>
            <person name="Miller J.R."/>
            <person name="Flanigan M.J."/>
            <person name="Edwards N.J."/>
            <person name="Bolanos R."/>
            <person name="Fasulo D."/>
            <person name="Halldorsson B.V."/>
            <person name="Hannenhalli S."/>
            <person name="Turner R."/>
            <person name="Yooseph S."/>
            <person name="Lu F."/>
            <person name="Nusskern D.R."/>
            <person name="Shue B.C."/>
            <person name="Zheng X.H."/>
            <person name="Zhong F."/>
            <person name="Delcher A.L."/>
            <person name="Huson D.H."/>
            <person name="Kravitz S.A."/>
            <person name="Mouchard L."/>
            <person name="Reinert K."/>
            <person name="Remington K.A."/>
            <person name="Clark A.G."/>
            <person name="Waterman M.S."/>
            <person name="Eichler E.E."/>
            <person name="Adams M.D."/>
            <person name="Hunkapiller M.W."/>
            <person name="Myers E.W."/>
            <person name="Venter J.C."/>
        </authorList>
    </citation>
    <scope>NUCLEOTIDE SEQUENCE [LARGE SCALE GENOMIC DNA] (IMGT ALLELE TRBC1*01)</scope>
</reference>
<reference key="6">
    <citation type="journal article" date="1997" name="J. Exp. Med.">
        <title>Signaling efficiency of the T cell receptor controlled by a single amino acid in the beta chain constant region.</title>
        <authorList>
            <person name="Baeckstroem B.T."/>
            <person name="Hausmann B.T."/>
            <person name="Palmer E."/>
        </authorList>
    </citation>
    <scope>FUNCTION</scope>
    <scope>DOMAIN</scope>
    <scope>MUTAGENESIS OF GLN-139</scope>
</reference>
<reference key="7">
    <citation type="book" date="2001" name="The T Cell Receptor FactsBook.">
        <title>The T Cell Receptor FactsBook.</title>
        <editorList>
            <person name="Lefranc M.P."/>
            <person name="Lefranc G."/>
        </editorList>
        <authorList>
            <person name="Lefranc M.P."/>
            <person name="Lefranc G."/>
        </authorList>
    </citation>
    <scope>NOMENCLATURE</scope>
</reference>
<reference key="8">
    <citation type="journal article" date="2004" name="Nat. Rev. Immunol.">
        <title>The many important facets of T-cell repertoire diversity.</title>
        <authorList>
            <person name="Nikolich-Zugich J."/>
            <person name="Slifka M.K."/>
            <person name="Messaoudi I."/>
        </authorList>
    </citation>
    <scope>REVIEW ON T CELL REPERTOIRE DIVERSITY</scope>
</reference>
<reference key="9">
    <citation type="journal article" date="2010" name="Cold Spring Harb. Perspect. Biol.">
        <title>Structural biology of the T-cell receptor: insights into receptor assembly, ligand recognition, and initiation of signaling.</title>
        <authorList>
            <person name="Wucherpfennig K.W."/>
            <person name="Gagnon E."/>
            <person name="Call M.J."/>
            <person name="Huseby E.S."/>
            <person name="Call M.E."/>
        </authorList>
    </citation>
    <scope>REVIEW ON T CELL RECEPTOR-CD3 COMPLEX ASSEMBLY</scope>
    <scope>SUBCELLULAR LOCATION</scope>
</reference>
<reference key="10">
    <citation type="journal article" date="2013" name="Nat. Rev. Immunol.">
        <title>T cell receptor signalling networks: branched, diversified and bounded.</title>
        <authorList>
            <person name="Brownlie R.J."/>
            <person name="Zamoyska R."/>
        </authorList>
    </citation>
    <scope>REVIEW ON T CELL RECEPTOR SIGNALING</scope>
</reference>
<reference key="11">
    <citation type="journal article" date="2014" name="Front. Immunol.">
        <title>Immunoglobulin and T Cell Receptor Genes: IMGT((R)) and the Birth and Rise of Immunoinformatics.</title>
        <authorList>
            <person name="Lefranc M.P."/>
        </authorList>
    </citation>
    <scope>NOMENCLATURE</scope>
</reference>
<reference key="12">
    <citation type="journal article" date="2015" name="Annu. Rev. Immunol.">
        <title>T cell antigen receptor recognition of antigen-presenting molecules.</title>
        <authorList>
            <person name="Rossjohn J."/>
            <person name="Gras S."/>
            <person name="Miles J.J."/>
            <person name="Turner S.J."/>
            <person name="Godfrey D.I."/>
            <person name="McCluskey J."/>
        </authorList>
    </citation>
    <scope>REVIEW ON FUNCTION</scope>
</reference>
<reference key="13">
    <citation type="journal article" date="2016" name="Proc. Natl. Acad. Sci. U.S.A.">
        <title>A conserved alphabeta transmembrane interface forms the core of a compact T-cell receptor-CD3 structure within the membrane.</title>
        <authorList>
            <person name="Krshnan L."/>
            <person name="Park S."/>
            <person name="Im W."/>
            <person name="Call M.J."/>
            <person name="Call M.E."/>
        </authorList>
    </citation>
    <scope>DISULFIDE BOND</scope>
    <scope>SUBUNIT</scope>
    <scope>MUTAGENESIS OF VAL-162</scope>
    <scope>DOMAIN</scope>
</reference>
<reference key="14">
    <citation type="journal article" date="2003" name="Nat. Immunol.">
        <title>A structural basis for immunodominant human T cell receptor recognition.</title>
        <authorList>
            <person name="Stewart-Jones G.B.E."/>
            <person name="McMichael A.J."/>
            <person name="Bell J.I."/>
            <person name="Stuart D.I."/>
            <person name="Jones E.Y."/>
        </authorList>
    </citation>
    <scope>X-RAY CRYSTALLOGRAPHY (1.4 ANGSTROMS) OF 1-129 IN COMPLEX WITH HLA-A/B2M HETERODIMER AND TRAC</scope>
</reference>
<reference key="15">
    <citation type="journal article" date="2009" name="Immunity">
        <title>The shaping of T cell receptor recognition by self-tolerance.</title>
        <authorList>
            <person name="Gras S."/>
            <person name="Burrows S.R."/>
            <person name="Kjer-Nielsen L."/>
            <person name="Clements C.S."/>
            <person name="Liu Y.C."/>
            <person name="Sullivan L.C."/>
            <person name="Bell M.J."/>
            <person name="Brooks A.G."/>
            <person name="Purcell A.W."/>
            <person name="McCluskey J."/>
            <person name="Rossjohn J."/>
        </authorList>
    </citation>
    <scope>X-RAY CRYSTALLOGRAPHY (2.8 ANGSTROMS) OF 1-129 IN COMPLEX WITH HLA-B/B2M HETERODIMER AND TRAC</scope>
    <scope>DISULFIDE BOND</scope>
</reference>
<comment type="function">
    <text evidence="6 7 9 10 11">Constant region of T cell receptor (TR) beta chain (PubMed:24600447). Alpha-beta T cell receptors are antigen specific receptors which are essential to the immune response and are present on the cell surface of T lymphocytes. Recognize peptide-major histocompatibility (MH) (pMH) complexes that are displayed by antigen presenting cells (APC), a prerequisite for efficient T cell adaptive immunity against pathogens (PubMed:25493333). Binding of alpha-beta TR to pMH complex initiates TR-CD3 clustering on the cell surface and intracellular activation of LCK that phosphorylates the ITAM motifs of CD3G, CD3D, CD3E and CD247 enabling the recruitment of ZAP70. In turn, ZAP70 phosphorylates LAT, which recruits numerous signaling molecules to form the LAT signalosome. The LAT signalosome propagates signal branching to three major signaling pathways, the calcium, the mitogen-activated protein kinase (MAPK) kinase and the nuclear factor NF-kappa-B (NF-kB) pathways, leading to the mobilization of transcription factors that are critical for gene expression and essential for T cell growth and differentiation (PubMed:23524462, PubMed:9382891). The T cell repertoire is generated in the thymus, by V-(D)-J rearrangement. This repertoire is then shaped by intrathymic selection events to generate a peripheral T cell pool of self-MH restricted, non-autoaggressive T cells. Post-thymic interaction of alpha-beta TR with the pMH complexes shapes TR structural and functional avidity (PubMed:15040585).</text>
</comment>
<comment type="subunit">
    <text evidence="5 8">Alpha-beta TR is a heterodimer composed of an alpha and beta chain; disulfide-linked. The alpha-beta TR is associated with the transmembrane signaling CD3 coreceptor proteins to form the TR-CD3 (TcR or TCR). The assembly of alpha-beta TR heterodimers with CD3 occurs in the endoplasmic reticulum where a single alpha-beta TR heterodimer associates with one CD3D-CD3E heterodimer, one CD3G-CD3E heterodimer and one CD247 homodimer forming a stable octameric structure. CD3D-CD3E and CD3G-CD3E heterodimers preferentially associate with TR alpha and TR beta chains, respectively. The association of the CD247 homodimer is the last step of TcR assembly in the endoplasmic reticulum and is required for transport to the cell surface.</text>
</comment>
<comment type="subcellular location">
    <subcellularLocation>
        <location evidence="8">Cell membrane</location>
    </subcellularLocation>
</comment>
<comment type="domain">
    <text evidence="6">The connecting peptide (CP) domain is essential for signal transmission in response to antigenic stimulation, likely downstream from ZAP70 recruitment.</text>
</comment>
<comment type="domain">
    <text evidence="5">The TM domain mediates the interaction with the CD3 subunits.</text>
</comment>
<comment type="polymorphism">
    <text evidence="13">There are several alleles. The sequence shown is that of IMGT allele TRBC1*01.</text>
</comment>
<comment type="sequence caution" evidence="13">
    <conflict type="miscellaneous discrepancy">
        <sequence resource="EMBL-CDS" id="CAA25134"/>
    </conflict>
    <text>Chimeric mRNA corresponding to regions V, J and C of T cell receptor (TR) alpha chain.</text>
</comment>
<proteinExistence type="evidence at protein level"/>
<organism>
    <name type="scientific">Homo sapiens</name>
    <name type="common">Human</name>
    <dbReference type="NCBI Taxonomy" id="9606"/>
    <lineage>
        <taxon>Eukaryota</taxon>
        <taxon>Metazoa</taxon>
        <taxon>Chordata</taxon>
        <taxon>Craniata</taxon>
        <taxon>Vertebrata</taxon>
        <taxon>Euteleostomi</taxon>
        <taxon>Mammalia</taxon>
        <taxon>Eutheria</taxon>
        <taxon>Euarchontoglires</taxon>
        <taxon>Primates</taxon>
        <taxon>Haplorrhini</taxon>
        <taxon>Catarrhini</taxon>
        <taxon>Hominidae</taxon>
        <taxon>Homo</taxon>
    </lineage>
</organism>
<keyword id="KW-0002">3D-structure</keyword>
<keyword id="KW-1064">Adaptive immunity</keyword>
<keyword id="KW-1003">Cell membrane</keyword>
<keyword id="KW-1015">Disulfide bond</keyword>
<keyword id="KW-0325">Glycoprotein</keyword>
<keyword id="KW-0391">Immunity</keyword>
<keyword id="KW-0393">Immunoglobulin domain</keyword>
<keyword id="KW-0472">Membrane</keyword>
<keyword id="KW-1267">Proteomics identification</keyword>
<keyword id="KW-0675">Receptor</keyword>
<keyword id="KW-1185">Reference proteome</keyword>
<keyword id="KW-1279">T cell receptor</keyword>
<keyword id="KW-0812">Transmembrane</keyword>
<keyword id="KW-1133">Transmembrane helix</keyword>
<evidence type="ECO:0000255" key="1"/>
<evidence type="ECO:0000255" key="2">
    <source>
        <dbReference type="PROSITE-ProRule" id="PRU00114"/>
    </source>
</evidence>
<evidence type="ECO:0000255" key="3">
    <source>
        <dbReference type="PROSITE-ProRule" id="PRU00498"/>
    </source>
</evidence>
<evidence type="ECO:0000269" key="4">
    <source>
    </source>
</evidence>
<evidence type="ECO:0000269" key="5">
    <source>
    </source>
</evidence>
<evidence type="ECO:0000269" key="6">
    <source>
    </source>
</evidence>
<evidence type="ECO:0000303" key="7">
    <source>
    </source>
</evidence>
<evidence type="ECO:0000303" key="8">
    <source>
    </source>
</evidence>
<evidence type="ECO:0000303" key="9">
    <source>
    </source>
</evidence>
<evidence type="ECO:0000303" key="10">
    <source>
    </source>
</evidence>
<evidence type="ECO:0000303" key="11">
    <source>
    </source>
</evidence>
<evidence type="ECO:0000303" key="12">
    <source ref="7"/>
</evidence>
<evidence type="ECO:0000305" key="13"/>
<evidence type="ECO:0000305" key="14">
    <source>
    </source>
</evidence>
<evidence type="ECO:0000305" key="15">
    <source>
    </source>
</evidence>
<evidence type="ECO:0007829" key="16">
    <source>
        <dbReference type="PDB" id="1OGA"/>
    </source>
</evidence>
<evidence type="ECO:0007829" key="17">
    <source>
        <dbReference type="PDB" id="1ZGL"/>
    </source>
</evidence>
<evidence type="ECO:0007829" key="18">
    <source>
        <dbReference type="PDB" id="7RYL"/>
    </source>
</evidence>
<name>TRBC1_HUMAN</name>
<feature type="chain" id="PRO_0000184526" description="T cell receptor beta constant 1">
    <location>
        <begin position="1" status="less than"/>
        <end position="176"/>
    </location>
</feature>
<feature type="transmembrane region" description="Helical" evidence="1">
    <location>
        <begin position="150"/>
        <end position="170"/>
    </location>
</feature>
<feature type="topological domain" description="Cytoplasmic" evidence="1">
    <location>
        <begin position="171"/>
        <end position="176"/>
    </location>
</feature>
<feature type="domain" description="Ig-like C1-type" evidence="2">
    <location>
        <begin position="8"/>
        <end position="117"/>
    </location>
</feature>
<feature type="region of interest" description="Connecting peptide" evidence="14 15">
    <location>
        <begin position="130"/>
        <end position="144"/>
    </location>
</feature>
<feature type="glycosylation site" description="N-linked (GlcNAc...) asparagine" evidence="3">
    <location>
        <position position="69"/>
    </location>
</feature>
<feature type="disulfide bond" evidence="2 4">
    <location>
        <begin position="30"/>
        <end position="95"/>
    </location>
</feature>
<feature type="disulfide bond" description="Interchain (with C-94 in TRAC)" evidence="5">
    <location>
        <position position="130"/>
    </location>
</feature>
<feature type="mutagenesis site" description="Impairs signal transduction in response to antigenic stimulation." evidence="6">
    <original>Q</original>
    <variation>F</variation>
    <location>
        <position position="139"/>
    </location>
</feature>
<feature type="mutagenesis site" description="Reduces TR-CD3 complex assembly." evidence="5">
    <original>V</original>
    <variation>F</variation>
    <location>
        <position position="162"/>
    </location>
</feature>
<feature type="non-terminal residue">
    <location>
        <position position="1"/>
    </location>
</feature>
<feature type="helix" evidence="16">
    <location>
        <begin position="2"/>
        <end position="4"/>
    </location>
</feature>
<feature type="strand" evidence="16">
    <location>
        <begin position="9"/>
        <end position="13"/>
    </location>
</feature>
<feature type="helix" evidence="16">
    <location>
        <begin position="17"/>
        <end position="23"/>
    </location>
</feature>
<feature type="strand" evidence="16">
    <location>
        <begin position="24"/>
        <end position="38"/>
    </location>
</feature>
<feature type="strand" evidence="16">
    <location>
        <begin position="40"/>
        <end position="46"/>
    </location>
</feature>
<feature type="strand" evidence="16">
    <location>
        <begin position="49"/>
        <end position="51"/>
    </location>
</feature>
<feature type="strand" evidence="16">
    <location>
        <begin position="53"/>
        <end position="57"/>
    </location>
</feature>
<feature type="strand" evidence="16">
    <location>
        <begin position="62"/>
        <end position="64"/>
    </location>
</feature>
<feature type="strand" evidence="18">
    <location>
        <begin position="68"/>
        <end position="70"/>
    </location>
</feature>
<feature type="strand" evidence="16">
    <location>
        <begin position="73"/>
        <end position="82"/>
    </location>
</feature>
<feature type="helix" evidence="16">
    <location>
        <begin position="83"/>
        <end position="86"/>
    </location>
</feature>
<feature type="strand" evidence="17">
    <location>
        <begin position="87"/>
        <end position="90"/>
    </location>
</feature>
<feature type="strand" evidence="16">
    <location>
        <begin position="92"/>
        <end position="99"/>
    </location>
</feature>
<feature type="strand" evidence="18">
    <location>
        <begin position="104"/>
        <end position="106"/>
    </location>
</feature>
<feature type="strand" evidence="16">
    <location>
        <begin position="110"/>
        <end position="112"/>
    </location>
</feature>
<feature type="strand" evidence="16">
    <location>
        <begin position="116"/>
        <end position="125"/>
    </location>
</feature>
<sequence>DLNKVFPPEVAVFEPSEAEISHTQKATLVCLATGFFPDHVELSWWVNGKEVHSGVSTDPQPLKEQPALNDSRYCLSSRLRVSATFWQNPRNHFRCQVQFYGLSENDEWTQDRAKPVTQIVSAEAWGRADCGFTSVSYQQGVLSATILYEILLGKATLYAVLVSALVLMAMVKRKDF</sequence>